<protein>
    <recommendedName>
        <fullName evidence="5">S-phase kinase-associated protein 1 homolog</fullName>
    </recommendedName>
    <alternativeName>
        <fullName evidence="4">Telomerase-associated protein of 20 kDa</fullName>
        <shortName evidence="4">p20</shortName>
    </alternativeName>
</protein>
<reference key="1">
    <citation type="journal article" date="2007" name="Mol. Cell. Biol.">
        <title>Positive and negative regulation of Tetrahymena telomerase holoenzyme.</title>
        <authorList>
            <person name="Witkin K.L."/>
            <person name="Prathapam R."/>
            <person name="Collins K."/>
        </authorList>
    </citation>
    <scope>NUCLEOTIDE SEQUENCE [MRNA]</scope>
    <scope>FUNCTION</scope>
    <scope>DISRUPTION PHENOTYPE</scope>
</reference>
<reference key="2">
    <citation type="journal article" date="2006" name="PLoS Biol.">
        <title>Macronuclear genome sequence of the ciliate Tetrahymena thermophila, a model eukaryote.</title>
        <authorList>
            <person name="Eisen J.A."/>
            <person name="Coyne R.S."/>
            <person name="Wu M."/>
            <person name="Wu D."/>
            <person name="Thiagarajan M."/>
            <person name="Wortman J.R."/>
            <person name="Badger J.H."/>
            <person name="Ren Q."/>
            <person name="Amedeo P."/>
            <person name="Jones K.M."/>
            <person name="Tallon L.J."/>
            <person name="Delcher A.L."/>
            <person name="Salzberg S.L."/>
            <person name="Silva J.C."/>
            <person name="Haas B.J."/>
            <person name="Majoros W.H."/>
            <person name="Farzad M."/>
            <person name="Carlton J.M."/>
            <person name="Smith R.K. Jr."/>
            <person name="Garg J."/>
            <person name="Pearlman R.E."/>
            <person name="Karrer K.M."/>
            <person name="Sun L."/>
            <person name="Manning G."/>
            <person name="Elde N.C."/>
            <person name="Turkewitz A.P."/>
            <person name="Asai D.J."/>
            <person name="Wilkes D.E."/>
            <person name="Wang Y."/>
            <person name="Cai H."/>
            <person name="Collins K."/>
            <person name="Stewart B.A."/>
            <person name="Lee S.R."/>
            <person name="Wilamowska K."/>
            <person name="Weinberg Z."/>
            <person name="Ruzzo W.L."/>
            <person name="Wloga D."/>
            <person name="Gaertig J."/>
            <person name="Frankel J."/>
            <person name="Tsao C.-C."/>
            <person name="Gorovsky M.A."/>
            <person name="Keeling P.J."/>
            <person name="Waller R.F."/>
            <person name="Patron N.J."/>
            <person name="Cherry J.M."/>
            <person name="Stover N.A."/>
            <person name="Krieger C.J."/>
            <person name="del Toro C."/>
            <person name="Ryder H.F."/>
            <person name="Williamson S.C."/>
            <person name="Barbeau R.A."/>
            <person name="Hamilton E.P."/>
            <person name="Orias E."/>
        </authorList>
    </citation>
    <scope>NUCLEOTIDE SEQUENCE [LARGE SCALE GENOMIC DNA]</scope>
    <source>
        <strain>SB210</strain>
    </source>
</reference>
<organism>
    <name type="scientific">Tetrahymena thermophila (strain SB210)</name>
    <dbReference type="NCBI Taxonomy" id="312017"/>
    <lineage>
        <taxon>Eukaryota</taxon>
        <taxon>Sar</taxon>
        <taxon>Alveolata</taxon>
        <taxon>Ciliophora</taxon>
        <taxon>Intramacronucleata</taxon>
        <taxon>Oligohymenophorea</taxon>
        <taxon>Hymenostomatida</taxon>
        <taxon>Tetrahymenina</taxon>
        <taxon>Tetrahymenidae</taxon>
        <taxon>Tetrahymena</taxon>
    </lineage>
</organism>
<accession>A0PGB3</accession>
<accession>Q23AC7</accession>
<dbReference type="EMBL" id="AY522577">
    <property type="protein sequence ID" value="AAS97867.1"/>
    <property type="molecule type" value="mRNA"/>
</dbReference>
<dbReference type="EMBL" id="GG662724">
    <property type="protein sequence ID" value="EAR93565.2"/>
    <property type="molecule type" value="Genomic_DNA"/>
</dbReference>
<dbReference type="RefSeq" id="XP_001013810.2">
    <property type="nucleotide sequence ID" value="XM_001013810.2"/>
</dbReference>
<dbReference type="SMR" id="A0PGB3"/>
<dbReference type="FunCoup" id="A0PGB3">
    <property type="interactions" value="329"/>
</dbReference>
<dbReference type="STRING" id="312017.Q23AC7"/>
<dbReference type="EnsemblProtists" id="EAR93565">
    <property type="protein sequence ID" value="EAR93565"/>
    <property type="gene ID" value="TTHERM_00426320"/>
</dbReference>
<dbReference type="GeneID" id="7834346"/>
<dbReference type="KEGG" id="tet:TTHERM_00426320"/>
<dbReference type="eggNOG" id="KOG1724">
    <property type="taxonomic scope" value="Eukaryota"/>
</dbReference>
<dbReference type="HOGENOM" id="CLU_059252_6_1_1"/>
<dbReference type="InParanoid" id="A0PGB3"/>
<dbReference type="OrthoDB" id="2342932at2759"/>
<dbReference type="UniPathway" id="UPA00143"/>
<dbReference type="Proteomes" id="UP000009168">
    <property type="component" value="Unassembled WGS sequence"/>
</dbReference>
<dbReference type="GO" id="GO:0016567">
    <property type="term" value="P:protein ubiquitination"/>
    <property type="evidence" value="ECO:0007669"/>
    <property type="project" value="UniProtKB-UniPathway"/>
</dbReference>
<dbReference type="GO" id="GO:0006511">
    <property type="term" value="P:ubiquitin-dependent protein catabolic process"/>
    <property type="evidence" value="ECO:0007669"/>
    <property type="project" value="InterPro"/>
</dbReference>
<dbReference type="CDD" id="cd18322">
    <property type="entry name" value="BTB_POZ_SKP1"/>
    <property type="match status" value="1"/>
</dbReference>
<dbReference type="FunFam" id="3.30.710.10:FF:000026">
    <property type="entry name" value="E3 ubiquitin ligase complex SCF subunit"/>
    <property type="match status" value="1"/>
</dbReference>
<dbReference type="Gene3D" id="3.30.710.10">
    <property type="entry name" value="Potassium Channel Kv1.1, Chain A"/>
    <property type="match status" value="1"/>
</dbReference>
<dbReference type="InterPro" id="IPR016897">
    <property type="entry name" value="SKP1"/>
</dbReference>
<dbReference type="InterPro" id="IPR001232">
    <property type="entry name" value="SKP1-like"/>
</dbReference>
<dbReference type="InterPro" id="IPR036296">
    <property type="entry name" value="SKP1-like_dim_sf"/>
</dbReference>
<dbReference type="InterPro" id="IPR011333">
    <property type="entry name" value="SKP1/BTB/POZ_sf"/>
</dbReference>
<dbReference type="InterPro" id="IPR016072">
    <property type="entry name" value="Skp1_comp_dimer"/>
</dbReference>
<dbReference type="InterPro" id="IPR016073">
    <property type="entry name" value="Skp1_comp_POZ"/>
</dbReference>
<dbReference type="PANTHER" id="PTHR11165">
    <property type="entry name" value="SKP1"/>
    <property type="match status" value="1"/>
</dbReference>
<dbReference type="Pfam" id="PF01466">
    <property type="entry name" value="Skp1"/>
    <property type="match status" value="1"/>
</dbReference>
<dbReference type="Pfam" id="PF03931">
    <property type="entry name" value="Skp1_POZ"/>
    <property type="match status" value="1"/>
</dbReference>
<dbReference type="PIRSF" id="PIRSF028729">
    <property type="entry name" value="E3_ubiquit_lig_SCF_Skp"/>
    <property type="match status" value="1"/>
</dbReference>
<dbReference type="SMART" id="SM00512">
    <property type="entry name" value="Skp1"/>
    <property type="match status" value="1"/>
</dbReference>
<dbReference type="SUPFAM" id="SSF54695">
    <property type="entry name" value="POZ domain"/>
    <property type="match status" value="1"/>
</dbReference>
<dbReference type="SUPFAM" id="SSF81382">
    <property type="entry name" value="Skp1 dimerisation domain-like"/>
    <property type="match status" value="1"/>
</dbReference>
<proteinExistence type="evidence at transcript level"/>
<comment type="function">
    <text evidence="1 3">Essential component of the SCF (SKP1-CUL1-F-box protein) ubiquitin ligase complex, which mediates the ubiquitination of proteins involved in cell cycle progression, signal transduction and transcription (By similarity). In the SCF complex, serves as an adapter that links the F-box protein to CUL1 (By similarity). The functional specificity of the SCF complex depends on the F-box protein as substrate recognition component (By similarity). Its association with the holoenzyme telomerase ribonucleoprotein complex suggests that it may play a role in turnover of holoenzyme telomerase complex components (PubMed:17220281).</text>
</comment>
<comment type="pathway">
    <text evidence="1">Protein modification; protein ubiquitination.</text>
</comment>
<comment type="subunit">
    <text evidence="6">Component of multiple SCF (SKP1-CUL1-F-box) E3 ubiquitin-protein ligase complexes formed of CUL1, SKP1, RBX1 and a variable F-box domain-containing protein as substrate-specific subunit.</text>
</comment>
<comment type="disruption phenotype">
    <text evidence="3">Increased telomere length.</text>
</comment>
<comment type="similarity">
    <text evidence="5">Belongs to the SKP1 family.</text>
</comment>
<evidence type="ECO:0000250" key="1">
    <source>
        <dbReference type="UniProtKB" id="P63208"/>
    </source>
</evidence>
<evidence type="ECO:0000250" key="2">
    <source>
        <dbReference type="UniProtKB" id="Q39255"/>
    </source>
</evidence>
<evidence type="ECO:0000269" key="3">
    <source>
    </source>
</evidence>
<evidence type="ECO:0000303" key="4">
    <source>
    </source>
</evidence>
<evidence type="ECO:0000305" key="5"/>
<evidence type="ECO:0000305" key="6">
    <source>
    </source>
</evidence>
<evidence type="ECO:0000312" key="7">
    <source>
        <dbReference type="EMBL" id="EAR93565.2"/>
    </source>
</evidence>
<keyword id="KW-1185">Reference proteome</keyword>
<keyword id="KW-0833">Ubl conjugation pathway</keyword>
<feature type="chain" id="PRO_0000449916" description="S-phase kinase-associated protein 1 homolog">
    <location>
        <begin position="1"/>
        <end position="166"/>
    </location>
</feature>
<feature type="region of interest" description="Interaction with the F-box domain of F-box proteins" evidence="2">
    <location>
        <begin position="105"/>
        <end position="166"/>
    </location>
</feature>
<name>SKP1_TETTS</name>
<sequence length="166" mass="18973">MDKGSTKVKLLSLENEIIEVDEEVAKKSQLIKNMIEDTGTEDDIPIPNVKKEILLKILEYCEKHKNDNPPEIEKPLTTSNLSELVDPYDAKFIDIENLEQLFEIILAANYLDIKSLLDLACAKVATLIKNKTPDEIRKTFNIPNDFTPEEEAQIREENKWAEEATS</sequence>
<gene>
    <name evidence="4" type="primary">SKP1</name>
    <name evidence="4" type="synonym">TAP20</name>
    <name evidence="7" type="ORF">TTHERM_00426320</name>
</gene>